<reference key="1">
    <citation type="submission" date="2007-07" db="EMBL/GenBank/DDBJ databases">
        <title>Complete sequence of chromosome of Xanthobacter autotrophicus Py2.</title>
        <authorList>
            <consortium name="US DOE Joint Genome Institute"/>
            <person name="Copeland A."/>
            <person name="Lucas S."/>
            <person name="Lapidus A."/>
            <person name="Barry K."/>
            <person name="Glavina del Rio T."/>
            <person name="Hammon N."/>
            <person name="Israni S."/>
            <person name="Dalin E."/>
            <person name="Tice H."/>
            <person name="Pitluck S."/>
            <person name="Sims D."/>
            <person name="Brettin T."/>
            <person name="Bruce D."/>
            <person name="Detter J.C."/>
            <person name="Han C."/>
            <person name="Tapia R."/>
            <person name="Brainard J."/>
            <person name="Schmutz J."/>
            <person name="Larimer F."/>
            <person name="Land M."/>
            <person name="Hauser L."/>
            <person name="Kyrpides N."/>
            <person name="Kim E."/>
            <person name="Ensigns S.A."/>
            <person name="Richardson P."/>
        </authorList>
    </citation>
    <scope>NUCLEOTIDE SEQUENCE [LARGE SCALE GENOMIC DNA]</scope>
    <source>
        <strain>ATCC BAA-1158 / Py2</strain>
    </source>
</reference>
<dbReference type="EC" id="2.7.1.39" evidence="1"/>
<dbReference type="EMBL" id="CP000781">
    <property type="protein sequence ID" value="ABS67599.1"/>
    <property type="molecule type" value="Genomic_DNA"/>
</dbReference>
<dbReference type="SMR" id="A7IHV6"/>
<dbReference type="STRING" id="78245.Xaut_2356"/>
<dbReference type="KEGG" id="xau:Xaut_2356"/>
<dbReference type="eggNOG" id="COG2334">
    <property type="taxonomic scope" value="Bacteria"/>
</dbReference>
<dbReference type="HOGENOM" id="CLU_053300_1_0_5"/>
<dbReference type="OrthoDB" id="9777460at2"/>
<dbReference type="PhylomeDB" id="A7IHV6"/>
<dbReference type="UniPathway" id="UPA00050">
    <property type="reaction ID" value="UER00064"/>
</dbReference>
<dbReference type="Proteomes" id="UP000002417">
    <property type="component" value="Chromosome"/>
</dbReference>
<dbReference type="GO" id="GO:0005524">
    <property type="term" value="F:ATP binding"/>
    <property type="evidence" value="ECO:0007669"/>
    <property type="project" value="UniProtKB-KW"/>
</dbReference>
<dbReference type="GO" id="GO:0004413">
    <property type="term" value="F:homoserine kinase activity"/>
    <property type="evidence" value="ECO:0007669"/>
    <property type="project" value="UniProtKB-UniRule"/>
</dbReference>
<dbReference type="GO" id="GO:0009088">
    <property type="term" value="P:threonine biosynthetic process"/>
    <property type="evidence" value="ECO:0007669"/>
    <property type="project" value="UniProtKB-UniRule"/>
</dbReference>
<dbReference type="CDD" id="cd05153">
    <property type="entry name" value="HomoserineK_II"/>
    <property type="match status" value="1"/>
</dbReference>
<dbReference type="Gene3D" id="3.90.1200.10">
    <property type="match status" value="1"/>
</dbReference>
<dbReference type="Gene3D" id="3.30.200.20">
    <property type="entry name" value="Phosphorylase Kinase, domain 1"/>
    <property type="match status" value="1"/>
</dbReference>
<dbReference type="HAMAP" id="MF_00301">
    <property type="entry name" value="Homoser_kinase_2"/>
    <property type="match status" value="1"/>
</dbReference>
<dbReference type="InterPro" id="IPR002575">
    <property type="entry name" value="Aminoglycoside_PTrfase"/>
</dbReference>
<dbReference type="InterPro" id="IPR005280">
    <property type="entry name" value="Homoserine_kinase_II"/>
</dbReference>
<dbReference type="InterPro" id="IPR011009">
    <property type="entry name" value="Kinase-like_dom_sf"/>
</dbReference>
<dbReference type="InterPro" id="IPR050249">
    <property type="entry name" value="Pseudomonas-type_ThrB"/>
</dbReference>
<dbReference type="NCBIfam" id="NF003558">
    <property type="entry name" value="PRK05231.1"/>
    <property type="match status" value="1"/>
</dbReference>
<dbReference type="NCBIfam" id="TIGR00938">
    <property type="entry name" value="thrB_alt"/>
    <property type="match status" value="1"/>
</dbReference>
<dbReference type="PANTHER" id="PTHR21064:SF6">
    <property type="entry name" value="AMINOGLYCOSIDE PHOSPHOTRANSFERASE DOMAIN-CONTAINING PROTEIN"/>
    <property type="match status" value="1"/>
</dbReference>
<dbReference type="PANTHER" id="PTHR21064">
    <property type="entry name" value="AMINOGLYCOSIDE PHOSPHOTRANSFERASE DOMAIN-CONTAINING PROTEIN-RELATED"/>
    <property type="match status" value="1"/>
</dbReference>
<dbReference type="Pfam" id="PF01636">
    <property type="entry name" value="APH"/>
    <property type="match status" value="1"/>
</dbReference>
<dbReference type="SUPFAM" id="SSF56112">
    <property type="entry name" value="Protein kinase-like (PK-like)"/>
    <property type="match status" value="1"/>
</dbReference>
<comment type="catalytic activity">
    <reaction evidence="1">
        <text>L-homoserine + ATP = O-phospho-L-homoserine + ADP + H(+)</text>
        <dbReference type="Rhea" id="RHEA:13985"/>
        <dbReference type="ChEBI" id="CHEBI:15378"/>
        <dbReference type="ChEBI" id="CHEBI:30616"/>
        <dbReference type="ChEBI" id="CHEBI:57476"/>
        <dbReference type="ChEBI" id="CHEBI:57590"/>
        <dbReference type="ChEBI" id="CHEBI:456216"/>
        <dbReference type="EC" id="2.7.1.39"/>
    </reaction>
</comment>
<comment type="pathway">
    <text evidence="1">Amino-acid biosynthesis; L-threonine biosynthesis; L-threonine from L-aspartate: step 4/5.</text>
</comment>
<comment type="similarity">
    <text evidence="1">Belongs to the pseudomonas-type ThrB family.</text>
</comment>
<organism>
    <name type="scientific">Xanthobacter autotrophicus (strain ATCC BAA-1158 / Py2)</name>
    <dbReference type="NCBI Taxonomy" id="78245"/>
    <lineage>
        <taxon>Bacteria</taxon>
        <taxon>Pseudomonadati</taxon>
        <taxon>Pseudomonadota</taxon>
        <taxon>Alphaproteobacteria</taxon>
        <taxon>Hyphomicrobiales</taxon>
        <taxon>Xanthobacteraceae</taxon>
        <taxon>Xanthobacter</taxon>
    </lineage>
</organism>
<gene>
    <name evidence="1" type="primary">thrB</name>
    <name type="ordered locus">Xaut_2356</name>
</gene>
<evidence type="ECO:0000255" key="1">
    <source>
        <dbReference type="HAMAP-Rule" id="MF_00301"/>
    </source>
</evidence>
<feature type="chain" id="PRO_1000115442" description="Homoserine kinase">
    <location>
        <begin position="1"/>
        <end position="321"/>
    </location>
</feature>
<name>KHSE_XANP2</name>
<sequence>MAVYTDVAPAELEAFLSGYDIGTLTSFHGIAEGVENSNFLVQTTRGSYILTLYEKRVNRDDLPFFIGLMEHLAARGLSCPQPVAQRSGAVLSEIAGRPAAMVTFLPGVSVRRPTAEHCAELGRGLAQLHLAGADFAMRRANNLSVAGWRPLFVAADGQADDVAPGLADAIAAELATLEANWPQGLPAGVIHADLFPDNAFFLDEKLSGIIDFYFACTDFLAYDVAVCLNAWCFEPDGSYNVTKGRALLSGYEAVRPLSGAEKAALPRLARGAALRFLLTRLVDWLNVPEGALVRPKDPLEYLKKLRFHQAVDSAQDYGLAA</sequence>
<accession>A7IHV6</accession>
<proteinExistence type="inferred from homology"/>
<keyword id="KW-0028">Amino-acid biosynthesis</keyword>
<keyword id="KW-0067">ATP-binding</keyword>
<keyword id="KW-0418">Kinase</keyword>
<keyword id="KW-0547">Nucleotide-binding</keyword>
<keyword id="KW-1185">Reference proteome</keyword>
<keyword id="KW-0791">Threonine biosynthesis</keyword>
<keyword id="KW-0808">Transferase</keyword>
<protein>
    <recommendedName>
        <fullName evidence="1">Homoserine kinase</fullName>
        <shortName evidence="1">HK</shortName>
        <shortName evidence="1">HSK</shortName>
        <ecNumber evidence="1">2.7.1.39</ecNumber>
    </recommendedName>
</protein>